<sequence>MAENQYYGTGRRKSSSARVFLKPGSGKIVINQRSLEVYFGRETARMVVNQPLELVDMVTKFDMYITVKGGGISGQAGAIRHGITRALMEYDESLRGELRKAGFVTRDAREVERKKVGLRKARRRPQFSKR</sequence>
<gene>
    <name evidence="1" type="primary">rpsI</name>
    <name type="ordered locus">YpsIP31758_0461</name>
</gene>
<dbReference type="EMBL" id="CP000720">
    <property type="protein sequence ID" value="ABS49454.1"/>
    <property type="molecule type" value="Genomic_DNA"/>
</dbReference>
<dbReference type="RefSeq" id="WP_002210133.1">
    <property type="nucleotide sequence ID" value="NC_009708.1"/>
</dbReference>
<dbReference type="SMR" id="A7FDX5"/>
<dbReference type="GeneID" id="96662997"/>
<dbReference type="KEGG" id="ypi:YpsIP31758_0461"/>
<dbReference type="HOGENOM" id="CLU_046483_2_1_6"/>
<dbReference type="Proteomes" id="UP000002412">
    <property type="component" value="Chromosome"/>
</dbReference>
<dbReference type="GO" id="GO:0022627">
    <property type="term" value="C:cytosolic small ribosomal subunit"/>
    <property type="evidence" value="ECO:0007669"/>
    <property type="project" value="TreeGrafter"/>
</dbReference>
<dbReference type="GO" id="GO:0003723">
    <property type="term" value="F:RNA binding"/>
    <property type="evidence" value="ECO:0007669"/>
    <property type="project" value="TreeGrafter"/>
</dbReference>
<dbReference type="GO" id="GO:0003735">
    <property type="term" value="F:structural constituent of ribosome"/>
    <property type="evidence" value="ECO:0007669"/>
    <property type="project" value="InterPro"/>
</dbReference>
<dbReference type="GO" id="GO:0006412">
    <property type="term" value="P:translation"/>
    <property type="evidence" value="ECO:0007669"/>
    <property type="project" value="UniProtKB-UniRule"/>
</dbReference>
<dbReference type="FunFam" id="3.30.230.10:FF:000001">
    <property type="entry name" value="30S ribosomal protein S9"/>
    <property type="match status" value="1"/>
</dbReference>
<dbReference type="Gene3D" id="3.30.230.10">
    <property type="match status" value="1"/>
</dbReference>
<dbReference type="HAMAP" id="MF_00532_B">
    <property type="entry name" value="Ribosomal_uS9_B"/>
    <property type="match status" value="1"/>
</dbReference>
<dbReference type="InterPro" id="IPR020568">
    <property type="entry name" value="Ribosomal_Su5_D2-typ_SF"/>
</dbReference>
<dbReference type="InterPro" id="IPR000754">
    <property type="entry name" value="Ribosomal_uS9"/>
</dbReference>
<dbReference type="InterPro" id="IPR023035">
    <property type="entry name" value="Ribosomal_uS9_bac/plastid"/>
</dbReference>
<dbReference type="InterPro" id="IPR020574">
    <property type="entry name" value="Ribosomal_uS9_CS"/>
</dbReference>
<dbReference type="InterPro" id="IPR014721">
    <property type="entry name" value="Ribsml_uS5_D2-typ_fold_subgr"/>
</dbReference>
<dbReference type="NCBIfam" id="NF001099">
    <property type="entry name" value="PRK00132.1"/>
    <property type="match status" value="1"/>
</dbReference>
<dbReference type="PANTHER" id="PTHR21569">
    <property type="entry name" value="RIBOSOMAL PROTEIN S9"/>
    <property type="match status" value="1"/>
</dbReference>
<dbReference type="PANTHER" id="PTHR21569:SF1">
    <property type="entry name" value="SMALL RIBOSOMAL SUBUNIT PROTEIN US9M"/>
    <property type="match status" value="1"/>
</dbReference>
<dbReference type="Pfam" id="PF00380">
    <property type="entry name" value="Ribosomal_S9"/>
    <property type="match status" value="1"/>
</dbReference>
<dbReference type="SUPFAM" id="SSF54211">
    <property type="entry name" value="Ribosomal protein S5 domain 2-like"/>
    <property type="match status" value="1"/>
</dbReference>
<dbReference type="PROSITE" id="PS00360">
    <property type="entry name" value="RIBOSOMAL_S9"/>
    <property type="match status" value="1"/>
</dbReference>
<evidence type="ECO:0000255" key="1">
    <source>
        <dbReference type="HAMAP-Rule" id="MF_00532"/>
    </source>
</evidence>
<evidence type="ECO:0000305" key="2"/>
<protein>
    <recommendedName>
        <fullName evidence="1">Small ribosomal subunit protein uS9</fullName>
    </recommendedName>
    <alternativeName>
        <fullName evidence="2">30S ribosomal protein S9</fullName>
    </alternativeName>
</protein>
<keyword id="KW-0687">Ribonucleoprotein</keyword>
<keyword id="KW-0689">Ribosomal protein</keyword>
<proteinExistence type="inferred from homology"/>
<feature type="chain" id="PRO_1000061015" description="Small ribosomal subunit protein uS9">
    <location>
        <begin position="1"/>
        <end position="130"/>
    </location>
</feature>
<reference key="1">
    <citation type="journal article" date="2007" name="PLoS Genet.">
        <title>The complete genome sequence of Yersinia pseudotuberculosis IP31758, the causative agent of Far East scarlet-like fever.</title>
        <authorList>
            <person name="Eppinger M."/>
            <person name="Rosovitz M.J."/>
            <person name="Fricke W.F."/>
            <person name="Rasko D.A."/>
            <person name="Kokorina G."/>
            <person name="Fayolle C."/>
            <person name="Lindler L.E."/>
            <person name="Carniel E."/>
            <person name="Ravel J."/>
        </authorList>
    </citation>
    <scope>NUCLEOTIDE SEQUENCE [LARGE SCALE GENOMIC DNA]</scope>
    <source>
        <strain>IP 31758</strain>
    </source>
</reference>
<organism>
    <name type="scientific">Yersinia pseudotuberculosis serotype O:1b (strain IP 31758)</name>
    <dbReference type="NCBI Taxonomy" id="349747"/>
    <lineage>
        <taxon>Bacteria</taxon>
        <taxon>Pseudomonadati</taxon>
        <taxon>Pseudomonadota</taxon>
        <taxon>Gammaproteobacteria</taxon>
        <taxon>Enterobacterales</taxon>
        <taxon>Yersiniaceae</taxon>
        <taxon>Yersinia</taxon>
    </lineage>
</organism>
<name>RS9_YERP3</name>
<accession>A7FDX5</accession>
<comment type="similarity">
    <text evidence="1">Belongs to the universal ribosomal protein uS9 family.</text>
</comment>